<organism>
    <name type="scientific">Chlamydia abortus (strain DSM 27085 / S26/3)</name>
    <name type="common">Chlamydophila abortus</name>
    <dbReference type="NCBI Taxonomy" id="218497"/>
    <lineage>
        <taxon>Bacteria</taxon>
        <taxon>Pseudomonadati</taxon>
        <taxon>Chlamydiota</taxon>
        <taxon>Chlamydiia</taxon>
        <taxon>Chlamydiales</taxon>
        <taxon>Chlamydiaceae</taxon>
        <taxon>Chlamydia/Chlamydophila group</taxon>
        <taxon>Chlamydia</taxon>
    </lineage>
</organism>
<protein>
    <recommendedName>
        <fullName evidence="1">Peptide chain release factor 1</fullName>
        <shortName evidence="1">RF-1</shortName>
    </recommendedName>
</protein>
<feature type="chain" id="PRO_0000263251" description="Peptide chain release factor 1">
    <location>
        <begin position="1"/>
        <end position="361"/>
    </location>
</feature>
<feature type="modified residue" description="N5-methylglutamine" evidence="1">
    <location>
        <position position="235"/>
    </location>
</feature>
<evidence type="ECO:0000255" key="1">
    <source>
        <dbReference type="HAMAP-Rule" id="MF_00093"/>
    </source>
</evidence>
<proteinExistence type="inferred from homology"/>
<comment type="function">
    <text evidence="1">Peptide chain release factor 1 directs the termination of translation in response to the peptide chain termination codons UAG and UAA.</text>
</comment>
<comment type="subcellular location">
    <subcellularLocation>
        <location evidence="1">Cytoplasm</location>
    </subcellularLocation>
</comment>
<comment type="PTM">
    <text evidence="1">Methylated by PrmC. Methylation increases the termination efficiency of RF1.</text>
</comment>
<comment type="similarity">
    <text evidence="1">Belongs to the prokaryotic/mitochondrial release factor family.</text>
</comment>
<sequence>MQKKILEYLKRLEEVEVEISNPEIFNNPKEYSLLSKEHARLSELKNTYDRVMAQEKVLSDDKQALAQEKDPEMIAMLEEGIQSGKAEVEKLYKILENLLVPPDPDDDLNVIMELRAGTGGDEAALFVGDCVRMYHLYASAKGWKYEVLSASESDIGGYKEYVMGISGTGVKRLLQYEAGTHRVQRVPETETQGRVHTSAITVAVLPEPAEDDEEVFIDEKDLKIDTFRASGAGGQHVNVTDSAVRITHLPTGVVVTCQDERSQHKNKAKAMRILKARIRDAEIQRRHKEASAMRSAQVGSGDRSERIRTYNFSQNRVTDHRIGLTLYSLDKVMEGDLDTITSALVSHAYHQLLQNGNEENS</sequence>
<reference key="1">
    <citation type="journal article" date="2005" name="Genome Res.">
        <title>The Chlamydophila abortus genome sequence reveals an array of variable proteins that contribute to interspecies variation.</title>
        <authorList>
            <person name="Thomson N.R."/>
            <person name="Yeats C."/>
            <person name="Bell K."/>
            <person name="Holden M.T.G."/>
            <person name="Bentley S.D."/>
            <person name="Livingstone M."/>
            <person name="Cerdeno-Tarraga A.-M."/>
            <person name="Harris B."/>
            <person name="Doggett J."/>
            <person name="Ormond D."/>
            <person name="Mungall K."/>
            <person name="Clarke K."/>
            <person name="Feltwell T."/>
            <person name="Hance Z."/>
            <person name="Sanders M."/>
            <person name="Quail M.A."/>
            <person name="Price C."/>
            <person name="Barrell B.G."/>
            <person name="Parkhill J."/>
            <person name="Longbottom D."/>
        </authorList>
    </citation>
    <scope>NUCLEOTIDE SEQUENCE [LARGE SCALE GENOMIC DNA]</scope>
    <source>
        <strain>DSM 27085 / S26/3</strain>
    </source>
</reference>
<name>RF1_CHLAB</name>
<gene>
    <name evidence="1" type="primary">prfA</name>
    <name type="ordered locus">CAB630</name>
</gene>
<keyword id="KW-0963">Cytoplasm</keyword>
<keyword id="KW-0488">Methylation</keyword>
<keyword id="KW-0648">Protein biosynthesis</keyword>
<dbReference type="EMBL" id="CR848038">
    <property type="protein sequence ID" value="CAH64077.1"/>
    <property type="molecule type" value="Genomic_DNA"/>
</dbReference>
<dbReference type="RefSeq" id="WP_011097218.1">
    <property type="nucleotide sequence ID" value="NC_004552.2"/>
</dbReference>
<dbReference type="SMR" id="Q5L5L4"/>
<dbReference type="KEGG" id="cab:CAB630"/>
<dbReference type="eggNOG" id="COG0216">
    <property type="taxonomic scope" value="Bacteria"/>
</dbReference>
<dbReference type="HOGENOM" id="CLU_036856_0_1_0"/>
<dbReference type="OrthoDB" id="9806673at2"/>
<dbReference type="Proteomes" id="UP000001012">
    <property type="component" value="Chromosome"/>
</dbReference>
<dbReference type="GO" id="GO:0005737">
    <property type="term" value="C:cytoplasm"/>
    <property type="evidence" value="ECO:0007669"/>
    <property type="project" value="UniProtKB-SubCell"/>
</dbReference>
<dbReference type="GO" id="GO:0016149">
    <property type="term" value="F:translation release factor activity, codon specific"/>
    <property type="evidence" value="ECO:0007669"/>
    <property type="project" value="UniProtKB-UniRule"/>
</dbReference>
<dbReference type="FunFam" id="3.30.160.20:FF:000004">
    <property type="entry name" value="Peptide chain release factor 1"/>
    <property type="match status" value="1"/>
</dbReference>
<dbReference type="FunFam" id="3.30.70.1660:FF:000002">
    <property type="entry name" value="Peptide chain release factor 1"/>
    <property type="match status" value="1"/>
</dbReference>
<dbReference type="FunFam" id="3.30.70.1660:FF:000004">
    <property type="entry name" value="Peptide chain release factor 1"/>
    <property type="match status" value="1"/>
</dbReference>
<dbReference type="Gene3D" id="3.30.160.20">
    <property type="match status" value="1"/>
</dbReference>
<dbReference type="Gene3D" id="3.30.70.1660">
    <property type="match status" value="1"/>
</dbReference>
<dbReference type="Gene3D" id="6.10.140.1950">
    <property type="match status" value="1"/>
</dbReference>
<dbReference type="HAMAP" id="MF_00093">
    <property type="entry name" value="Rel_fac_1"/>
    <property type="match status" value="1"/>
</dbReference>
<dbReference type="InterPro" id="IPR005139">
    <property type="entry name" value="PCRF"/>
</dbReference>
<dbReference type="InterPro" id="IPR000352">
    <property type="entry name" value="Pep_chain_release_fac_I"/>
</dbReference>
<dbReference type="InterPro" id="IPR045853">
    <property type="entry name" value="Pep_chain_release_fac_I_sf"/>
</dbReference>
<dbReference type="InterPro" id="IPR050057">
    <property type="entry name" value="Prokaryotic/Mito_RF"/>
</dbReference>
<dbReference type="InterPro" id="IPR004373">
    <property type="entry name" value="RF-1"/>
</dbReference>
<dbReference type="NCBIfam" id="TIGR00019">
    <property type="entry name" value="prfA"/>
    <property type="match status" value="1"/>
</dbReference>
<dbReference type="NCBIfam" id="NF001859">
    <property type="entry name" value="PRK00591.1"/>
    <property type="match status" value="1"/>
</dbReference>
<dbReference type="PANTHER" id="PTHR43804">
    <property type="entry name" value="LD18447P"/>
    <property type="match status" value="1"/>
</dbReference>
<dbReference type="PANTHER" id="PTHR43804:SF7">
    <property type="entry name" value="LD18447P"/>
    <property type="match status" value="1"/>
</dbReference>
<dbReference type="Pfam" id="PF03462">
    <property type="entry name" value="PCRF"/>
    <property type="match status" value="1"/>
</dbReference>
<dbReference type="Pfam" id="PF00472">
    <property type="entry name" value="RF-1"/>
    <property type="match status" value="1"/>
</dbReference>
<dbReference type="SMART" id="SM00937">
    <property type="entry name" value="PCRF"/>
    <property type="match status" value="1"/>
</dbReference>
<dbReference type="SUPFAM" id="SSF75620">
    <property type="entry name" value="Release factor"/>
    <property type="match status" value="1"/>
</dbReference>
<dbReference type="PROSITE" id="PS00745">
    <property type="entry name" value="RF_PROK_I"/>
    <property type="match status" value="1"/>
</dbReference>
<accession>Q5L5L4</accession>